<organismHost>
    <name type="scientific">Felidae</name>
    <name type="common">cat family</name>
    <dbReference type="NCBI Taxonomy" id="9681"/>
</organismHost>
<proteinExistence type="inferred from homology"/>
<sequence length="343" mass="38923">MASGTIPVQNEEIIKSQVNTVRIYIDGAYGIGKSLTAKYLVRADENRPGYTYYFPEPMLYWRSLFETDVVGGIYAVQDRKRRGELSAEDAAYITAHYQARFAAPYLLLHSRLSTITGYQKVVCEEHPDVTLIIDRHPLASLVCFPLARYFVGDMTLGSVLSLMATLPREPPGGNLVVTTLNIEEHLKRLRGRSRTGEQIDMKLIHALRNVYMMLVHTKKFLTKNTSWRDGWGKLKIFSHYERNRLVETTIVSDSTESDLCDTLFSVFKARELSDQNGDLLDMHAWVLDGLMETLQNLQIFTLNLEGTPDECAAALGALRQDMDMTFIAACDMHRISEALTIYH</sequence>
<protein>
    <recommendedName>
        <fullName evidence="1">Thymidine kinase</fullName>
        <ecNumber evidence="1">2.7.1.21</ecNumber>
    </recommendedName>
</protein>
<organism>
    <name type="scientific">Feline herpesvirus 1</name>
    <name type="common">FeHV-1</name>
    <name type="synonym">Feline viral rhinotracheitis virus</name>
    <dbReference type="NCBI Taxonomy" id="10334"/>
    <lineage>
        <taxon>Viruses</taxon>
        <taxon>Duplodnaviria</taxon>
        <taxon>Heunggongvirae</taxon>
        <taxon>Peploviricota</taxon>
        <taxon>Herviviricetes</taxon>
        <taxon>Herpesvirales</taxon>
        <taxon>Orthoherpesviridae</taxon>
        <taxon>Alphaherpesvirinae</taxon>
        <taxon>Varicellovirus</taxon>
        <taxon>Varicellovirus felidalpha1</taxon>
    </lineage>
</organism>
<evidence type="ECO:0000255" key="1">
    <source>
        <dbReference type="HAMAP-Rule" id="MF_04029"/>
    </source>
</evidence>
<reference key="1">
    <citation type="journal article" date="1989" name="J. Virol.">
        <title>Identification of the thymidine kinase gene of feline herpesvirus: use of degenerate oligonucleotides in the polymerase chain reaction to isolate herpesvirus gene homologs.</title>
        <authorList>
            <person name="Nunberg J.H."/>
            <person name="Wright D.K."/>
            <person name="Cole G.E."/>
            <person name="Petrovskis E.A."/>
            <person name="Post L.E."/>
            <person name="Compton T."/>
            <person name="Gilbert J.H."/>
        </authorList>
    </citation>
    <scope>NUCLEOTIDE SEQUENCE [GENOMIC DNA]</scope>
    <source>
        <strain>UC-D</strain>
    </source>
</reference>
<comment type="function">
    <text evidence="1">Catalyzes the transfer of the gamma-phospho group of ATP to thymidine to generate dTMP in the salvage pathway of pyrimidine synthesis. The dTMP serves as a substrate for DNA polymerase during viral DNA replication. Allows the virus to be reactivated and to grow in non-proliferative cells lacking a high concentration of phosphorylated nucleic acid precursors.</text>
</comment>
<comment type="catalytic activity">
    <reaction evidence="1">
        <text>thymidine + ATP = dTMP + ADP + H(+)</text>
        <dbReference type="Rhea" id="RHEA:19129"/>
        <dbReference type="ChEBI" id="CHEBI:15378"/>
        <dbReference type="ChEBI" id="CHEBI:17748"/>
        <dbReference type="ChEBI" id="CHEBI:30616"/>
        <dbReference type="ChEBI" id="CHEBI:63528"/>
        <dbReference type="ChEBI" id="CHEBI:456216"/>
        <dbReference type="EC" id="2.7.1.21"/>
    </reaction>
</comment>
<comment type="subunit">
    <text evidence="1">Homodimer.</text>
</comment>
<comment type="similarity">
    <text evidence="1">Belongs to the herpesviridae thymidine kinase family.</text>
</comment>
<feature type="chain" id="PRO_0000175075" description="Thymidine kinase">
    <location>
        <begin position="1"/>
        <end position="343"/>
    </location>
</feature>
<feature type="active site" description="Proton acceptor" evidence="1">
    <location>
        <position position="56"/>
    </location>
</feature>
<feature type="binding site" evidence="1">
    <location>
        <begin position="27"/>
        <end position="34"/>
    </location>
    <ligand>
        <name>ATP</name>
        <dbReference type="ChEBI" id="CHEBI:30616"/>
    </ligand>
</feature>
<feature type="binding site" evidence="1">
    <location>
        <position position="74"/>
    </location>
    <ligand>
        <name>substrate</name>
    </ligand>
</feature>
<feature type="binding site" evidence="1">
    <location>
        <position position="98"/>
    </location>
    <ligand>
        <name>substrate</name>
    </ligand>
</feature>
<feature type="binding site" evidence="1">
    <location>
        <position position="188"/>
    </location>
    <ligand>
        <name>ATP</name>
        <dbReference type="ChEBI" id="CHEBI:30616"/>
    </ligand>
</feature>
<feature type="binding site" evidence="1">
    <location>
        <position position="194"/>
    </location>
    <ligand>
        <name>substrate</name>
    </ligand>
</feature>
<keyword id="KW-0067">ATP-binding</keyword>
<keyword id="KW-0237">DNA synthesis</keyword>
<keyword id="KW-0244">Early protein</keyword>
<keyword id="KW-0418">Kinase</keyword>
<keyword id="KW-0547">Nucleotide-binding</keyword>
<keyword id="KW-0808">Transferase</keyword>
<dbReference type="EC" id="2.7.1.21" evidence="1"/>
<dbReference type="EMBL" id="M26660">
    <property type="protein sequence ID" value="AAA46172.1"/>
    <property type="molecule type" value="Genomic_DNA"/>
</dbReference>
<dbReference type="PIR" id="A32388">
    <property type="entry name" value="KIBEFH"/>
</dbReference>
<dbReference type="SMR" id="P13159"/>
<dbReference type="BindingDB" id="P13159"/>
<dbReference type="ChEMBL" id="CHEMBL1795128"/>
<dbReference type="DrugBank" id="DB03312">
    <property type="generic name" value="Brivudine"/>
</dbReference>
<dbReference type="KEGG" id="vg:8658565"/>
<dbReference type="OrthoDB" id="9128at10239"/>
<dbReference type="PRO" id="PR:P13159"/>
<dbReference type="GO" id="GO:0005524">
    <property type="term" value="F:ATP binding"/>
    <property type="evidence" value="ECO:0007669"/>
    <property type="project" value="UniProtKB-KW"/>
</dbReference>
<dbReference type="GO" id="GO:0004797">
    <property type="term" value="F:thymidine kinase activity"/>
    <property type="evidence" value="ECO:0007669"/>
    <property type="project" value="UniProtKB-EC"/>
</dbReference>
<dbReference type="GO" id="GO:0071897">
    <property type="term" value="P:DNA biosynthetic process"/>
    <property type="evidence" value="ECO:0007669"/>
    <property type="project" value="UniProtKB-KW"/>
</dbReference>
<dbReference type="GO" id="GO:0006230">
    <property type="term" value="P:TMP biosynthetic process"/>
    <property type="evidence" value="ECO:0007669"/>
    <property type="project" value="InterPro"/>
</dbReference>
<dbReference type="Gene3D" id="3.40.50.300">
    <property type="entry name" value="P-loop containing nucleotide triphosphate hydrolases"/>
    <property type="match status" value="1"/>
</dbReference>
<dbReference type="HAMAP" id="MF_04029">
    <property type="entry name" value="HSV_KITH"/>
    <property type="match status" value="1"/>
</dbReference>
<dbReference type="InterPro" id="IPR001889">
    <property type="entry name" value="Herpes_TK"/>
</dbReference>
<dbReference type="InterPro" id="IPR027417">
    <property type="entry name" value="P-loop_NTPase"/>
</dbReference>
<dbReference type="Pfam" id="PF00693">
    <property type="entry name" value="Herpes_TK"/>
    <property type="match status" value="1"/>
</dbReference>
<dbReference type="SUPFAM" id="SSF52540">
    <property type="entry name" value="P-loop containing nucleoside triphosphate hydrolases"/>
    <property type="match status" value="1"/>
</dbReference>
<gene>
    <name evidence="1" type="primary">TK</name>
</gene>
<accession>P13159</accession>
<name>KITH_FHV1</name>